<reference key="1">
    <citation type="journal article" date="2008" name="Genome Res.">
        <title>Genome sequence of the beta-rhizobium Cupriavidus taiwanensis and comparative genomics of rhizobia.</title>
        <authorList>
            <person name="Amadou C."/>
            <person name="Pascal G."/>
            <person name="Mangenot S."/>
            <person name="Glew M."/>
            <person name="Bontemps C."/>
            <person name="Capela D."/>
            <person name="Carrere S."/>
            <person name="Cruveiller S."/>
            <person name="Dossat C."/>
            <person name="Lajus A."/>
            <person name="Marchetti M."/>
            <person name="Poinsot V."/>
            <person name="Rouy Z."/>
            <person name="Servin B."/>
            <person name="Saad M."/>
            <person name="Schenowitz C."/>
            <person name="Barbe V."/>
            <person name="Batut J."/>
            <person name="Medigue C."/>
            <person name="Masson-Boivin C."/>
        </authorList>
    </citation>
    <scope>NUCLEOTIDE SEQUENCE [LARGE SCALE GENOMIC DNA]</scope>
    <source>
        <strain>DSM 17343 / BCRC 17206 / CCUG 44338 / CIP 107171 / LMG 19424 / R1</strain>
    </source>
</reference>
<feature type="signal peptide" evidence="1">
    <location>
        <begin position="1"/>
        <end position="23"/>
    </location>
</feature>
<feature type="chain" id="PRO_1000123942" description="Flagellar L-ring protein">
    <location>
        <begin position="24"/>
        <end position="229"/>
    </location>
</feature>
<feature type="lipid moiety-binding region" description="N-palmitoyl cysteine" evidence="1">
    <location>
        <position position="24"/>
    </location>
</feature>
<feature type="lipid moiety-binding region" description="S-diacylglycerol cysteine" evidence="1">
    <location>
        <position position="24"/>
    </location>
</feature>
<name>FLGH_CUPTR</name>
<accession>B2AI82</accession>
<proteinExistence type="inferred from homology"/>
<evidence type="ECO:0000255" key="1">
    <source>
        <dbReference type="HAMAP-Rule" id="MF_00415"/>
    </source>
</evidence>
<keyword id="KW-0975">Bacterial flagellum</keyword>
<keyword id="KW-0998">Cell outer membrane</keyword>
<keyword id="KW-0449">Lipoprotein</keyword>
<keyword id="KW-0472">Membrane</keyword>
<keyword id="KW-0564">Palmitate</keyword>
<keyword id="KW-0732">Signal</keyword>
<dbReference type="EMBL" id="CU633750">
    <property type="protein sequence ID" value="CAP63481.1"/>
    <property type="molecule type" value="Genomic_DNA"/>
</dbReference>
<dbReference type="SMR" id="B2AI82"/>
<dbReference type="KEGG" id="cti:RALTA_B0283"/>
<dbReference type="eggNOG" id="COG2063">
    <property type="taxonomic scope" value="Bacteria"/>
</dbReference>
<dbReference type="HOGENOM" id="CLU_069313_0_0_4"/>
<dbReference type="Proteomes" id="UP000001692">
    <property type="component" value="Chromosome 2"/>
</dbReference>
<dbReference type="GO" id="GO:0009427">
    <property type="term" value="C:bacterial-type flagellum basal body, distal rod, L ring"/>
    <property type="evidence" value="ECO:0007669"/>
    <property type="project" value="InterPro"/>
</dbReference>
<dbReference type="GO" id="GO:0009279">
    <property type="term" value="C:cell outer membrane"/>
    <property type="evidence" value="ECO:0007669"/>
    <property type="project" value="UniProtKB-SubCell"/>
</dbReference>
<dbReference type="GO" id="GO:0003774">
    <property type="term" value="F:cytoskeletal motor activity"/>
    <property type="evidence" value="ECO:0007669"/>
    <property type="project" value="InterPro"/>
</dbReference>
<dbReference type="GO" id="GO:0071973">
    <property type="term" value="P:bacterial-type flagellum-dependent cell motility"/>
    <property type="evidence" value="ECO:0007669"/>
    <property type="project" value="InterPro"/>
</dbReference>
<dbReference type="HAMAP" id="MF_00415">
    <property type="entry name" value="FlgH"/>
    <property type="match status" value="1"/>
</dbReference>
<dbReference type="InterPro" id="IPR000527">
    <property type="entry name" value="Flag_Lring"/>
</dbReference>
<dbReference type="NCBIfam" id="NF009337">
    <property type="entry name" value="PRK12697.1"/>
    <property type="match status" value="1"/>
</dbReference>
<dbReference type="PANTHER" id="PTHR34933">
    <property type="entry name" value="FLAGELLAR L-RING PROTEIN"/>
    <property type="match status" value="1"/>
</dbReference>
<dbReference type="PANTHER" id="PTHR34933:SF3">
    <property type="entry name" value="FLAGELLAR L-RING PROTEIN"/>
    <property type="match status" value="1"/>
</dbReference>
<dbReference type="Pfam" id="PF02107">
    <property type="entry name" value="FlgH"/>
    <property type="match status" value="1"/>
</dbReference>
<dbReference type="PRINTS" id="PR01008">
    <property type="entry name" value="FLGLRINGFLGH"/>
</dbReference>
<dbReference type="PROSITE" id="PS51257">
    <property type="entry name" value="PROKAR_LIPOPROTEIN"/>
    <property type="match status" value="1"/>
</dbReference>
<sequence>MLSRLGARALVCLAGVAMLAASGCALMPREPLVQMPTTARAEPRPIGPASGSIFQSSYAGNPLFEDRRPRNVGDILTILITENVNASKNSGTNTSRTGNAALAFDSVPRALGGLFGTSQNANINGANTMKASGGASAANTFNGTITVTVLEVLANGNLVVSGEKQMAINQGAEFIRFSGVVNPRTITGDNAVLSTQVADARIEYTAKGVIDEAQNMGWLQRFFLNVSPF</sequence>
<gene>
    <name evidence="1" type="primary">flgH</name>
    <name type="ordered locus">RALTA_B0283</name>
</gene>
<protein>
    <recommendedName>
        <fullName evidence="1">Flagellar L-ring protein</fullName>
    </recommendedName>
    <alternativeName>
        <fullName evidence="1">Basal body L-ring protein</fullName>
    </alternativeName>
</protein>
<organism>
    <name type="scientific">Cupriavidus taiwanensis (strain DSM 17343 / BCRC 17206 / CCUG 44338 / CIP 107171 / LMG 19424 / R1)</name>
    <name type="common">Ralstonia taiwanensis (strain LMG 19424)</name>
    <dbReference type="NCBI Taxonomy" id="977880"/>
    <lineage>
        <taxon>Bacteria</taxon>
        <taxon>Pseudomonadati</taxon>
        <taxon>Pseudomonadota</taxon>
        <taxon>Betaproteobacteria</taxon>
        <taxon>Burkholderiales</taxon>
        <taxon>Burkholderiaceae</taxon>
        <taxon>Cupriavidus</taxon>
    </lineage>
</organism>
<comment type="function">
    <text evidence="1">Assembles around the rod to form the L-ring and probably protects the motor/basal body from shearing forces during rotation.</text>
</comment>
<comment type="subunit">
    <text evidence="1">The basal body constitutes a major portion of the flagellar organelle and consists of four rings (L,P,S, and M) mounted on a central rod.</text>
</comment>
<comment type="subcellular location">
    <subcellularLocation>
        <location evidence="1">Cell outer membrane</location>
        <topology evidence="1">Lipid-anchor</topology>
    </subcellularLocation>
    <subcellularLocation>
        <location evidence="1">Bacterial flagellum basal body</location>
    </subcellularLocation>
</comment>
<comment type="similarity">
    <text evidence="1">Belongs to the FlgH family.</text>
</comment>